<keyword id="KW-0028">Amino-acid biosynthesis</keyword>
<keyword id="KW-0067">ATP-binding</keyword>
<keyword id="KW-0963">Cytoplasm</keyword>
<keyword id="KW-0368">Histidine biosynthesis</keyword>
<keyword id="KW-0378">Hydrolase</keyword>
<keyword id="KW-0547">Nucleotide-binding</keyword>
<keyword id="KW-1185">Reference proteome</keyword>
<evidence type="ECO:0000250" key="1"/>
<evidence type="ECO:0000305" key="2"/>
<feature type="chain" id="PRO_0000136390" description="Phosphoribosyl-ATP pyrophosphatase">
    <location>
        <begin position="1"/>
        <end position="104"/>
    </location>
</feature>
<protein>
    <recommendedName>
        <fullName>Phosphoribosyl-ATP pyrophosphatase</fullName>
        <shortName>PRA-PH</shortName>
        <ecNumber>3.6.1.31</ecNumber>
    </recommendedName>
</protein>
<dbReference type="EC" id="3.6.1.31"/>
<dbReference type="EMBL" id="AE010299">
    <property type="protein sequence ID" value="AAM04808.1"/>
    <property type="molecule type" value="Genomic_DNA"/>
</dbReference>
<dbReference type="RefSeq" id="WP_011021409.1">
    <property type="nucleotide sequence ID" value="NC_003552.1"/>
</dbReference>
<dbReference type="SMR" id="P58834"/>
<dbReference type="FunCoup" id="P58834">
    <property type="interactions" value="78"/>
</dbReference>
<dbReference type="STRING" id="188937.MA_1392"/>
<dbReference type="EnsemblBacteria" id="AAM04808">
    <property type="protein sequence ID" value="AAM04808"/>
    <property type="gene ID" value="MA_1392"/>
</dbReference>
<dbReference type="GeneID" id="1473280"/>
<dbReference type="KEGG" id="mac:MA_1392"/>
<dbReference type="HOGENOM" id="CLU_123337_0_0_2"/>
<dbReference type="InParanoid" id="P58834"/>
<dbReference type="OrthoDB" id="39686at2157"/>
<dbReference type="PhylomeDB" id="P58834"/>
<dbReference type="UniPathway" id="UPA00031">
    <property type="reaction ID" value="UER00007"/>
</dbReference>
<dbReference type="Proteomes" id="UP000002487">
    <property type="component" value="Chromosome"/>
</dbReference>
<dbReference type="GO" id="GO:0005737">
    <property type="term" value="C:cytoplasm"/>
    <property type="evidence" value="ECO:0007669"/>
    <property type="project" value="UniProtKB-SubCell"/>
</dbReference>
<dbReference type="GO" id="GO:0005524">
    <property type="term" value="F:ATP binding"/>
    <property type="evidence" value="ECO:0007669"/>
    <property type="project" value="UniProtKB-KW"/>
</dbReference>
<dbReference type="GO" id="GO:0004636">
    <property type="term" value="F:phosphoribosyl-ATP diphosphatase activity"/>
    <property type="evidence" value="ECO:0007669"/>
    <property type="project" value="UniProtKB-UniRule"/>
</dbReference>
<dbReference type="GO" id="GO:0000105">
    <property type="term" value="P:L-histidine biosynthetic process"/>
    <property type="evidence" value="ECO:0007669"/>
    <property type="project" value="UniProtKB-UniRule"/>
</dbReference>
<dbReference type="CDD" id="cd11534">
    <property type="entry name" value="NTP-PPase_HisIE_like"/>
    <property type="match status" value="1"/>
</dbReference>
<dbReference type="Gene3D" id="1.10.287.1080">
    <property type="entry name" value="MazG-like"/>
    <property type="match status" value="1"/>
</dbReference>
<dbReference type="HAMAP" id="MF_01020">
    <property type="entry name" value="HisE"/>
    <property type="match status" value="1"/>
</dbReference>
<dbReference type="InterPro" id="IPR008179">
    <property type="entry name" value="HisE"/>
</dbReference>
<dbReference type="InterPro" id="IPR021130">
    <property type="entry name" value="PRib-ATP_PPHydrolase-like"/>
</dbReference>
<dbReference type="NCBIfam" id="TIGR03188">
    <property type="entry name" value="histidine_hisI"/>
    <property type="match status" value="1"/>
</dbReference>
<dbReference type="PANTHER" id="PTHR42945">
    <property type="entry name" value="HISTIDINE BIOSYNTHESIS BIFUNCTIONAL PROTEIN"/>
    <property type="match status" value="1"/>
</dbReference>
<dbReference type="PANTHER" id="PTHR42945:SF9">
    <property type="entry name" value="HISTIDINE BIOSYNTHESIS BIFUNCTIONAL PROTEIN HISIE"/>
    <property type="match status" value="1"/>
</dbReference>
<dbReference type="Pfam" id="PF01503">
    <property type="entry name" value="PRA-PH"/>
    <property type="match status" value="1"/>
</dbReference>
<dbReference type="SUPFAM" id="SSF101386">
    <property type="entry name" value="all-alpha NTP pyrophosphatases"/>
    <property type="match status" value="1"/>
</dbReference>
<organism>
    <name type="scientific">Methanosarcina acetivorans (strain ATCC 35395 / DSM 2834 / JCM 12185 / C2A)</name>
    <dbReference type="NCBI Taxonomy" id="188937"/>
    <lineage>
        <taxon>Archaea</taxon>
        <taxon>Methanobacteriati</taxon>
        <taxon>Methanobacteriota</taxon>
        <taxon>Stenosarchaea group</taxon>
        <taxon>Methanomicrobia</taxon>
        <taxon>Methanosarcinales</taxon>
        <taxon>Methanosarcinaceae</taxon>
        <taxon>Methanosarcina</taxon>
    </lineage>
</organism>
<proteinExistence type="inferred from homology"/>
<reference key="1">
    <citation type="journal article" date="2002" name="Genome Res.">
        <title>The genome of Methanosarcina acetivorans reveals extensive metabolic and physiological diversity.</title>
        <authorList>
            <person name="Galagan J.E."/>
            <person name="Nusbaum C."/>
            <person name="Roy A."/>
            <person name="Endrizzi M.G."/>
            <person name="Macdonald P."/>
            <person name="FitzHugh W."/>
            <person name="Calvo S."/>
            <person name="Engels R."/>
            <person name="Smirnov S."/>
            <person name="Atnoor D."/>
            <person name="Brown A."/>
            <person name="Allen N."/>
            <person name="Naylor J."/>
            <person name="Stange-Thomann N."/>
            <person name="DeArellano K."/>
            <person name="Johnson R."/>
            <person name="Linton L."/>
            <person name="McEwan P."/>
            <person name="McKernan K."/>
            <person name="Talamas J."/>
            <person name="Tirrell A."/>
            <person name="Ye W."/>
            <person name="Zimmer A."/>
            <person name="Barber R.D."/>
            <person name="Cann I."/>
            <person name="Graham D.E."/>
            <person name="Grahame D.A."/>
            <person name="Guss A.M."/>
            <person name="Hedderich R."/>
            <person name="Ingram-Smith C."/>
            <person name="Kuettner H.C."/>
            <person name="Krzycki J.A."/>
            <person name="Leigh J.A."/>
            <person name="Li W."/>
            <person name="Liu J."/>
            <person name="Mukhopadhyay B."/>
            <person name="Reeve J.N."/>
            <person name="Smith K."/>
            <person name="Springer T.A."/>
            <person name="Umayam L.A."/>
            <person name="White O."/>
            <person name="White R.H."/>
            <person name="de Macario E.C."/>
            <person name="Ferry J.G."/>
            <person name="Jarrell K.F."/>
            <person name="Jing H."/>
            <person name="Macario A.J.L."/>
            <person name="Paulsen I.T."/>
            <person name="Pritchett M."/>
            <person name="Sowers K.R."/>
            <person name="Swanson R.V."/>
            <person name="Zinder S.H."/>
            <person name="Lander E."/>
            <person name="Metcalf W.W."/>
            <person name="Birren B."/>
        </authorList>
    </citation>
    <scope>NUCLEOTIDE SEQUENCE [LARGE SCALE GENOMIC DNA]</scope>
    <source>
        <strain>ATCC 35395 / DSM 2834 / JCM 12185 / C2A</strain>
    </source>
</reference>
<accession>P58834</accession>
<comment type="catalytic activity">
    <reaction>
        <text>1-(5-phospho-beta-D-ribosyl)-ATP + H2O = 1-(5-phospho-beta-D-ribosyl)-5'-AMP + diphosphate + H(+)</text>
        <dbReference type="Rhea" id="RHEA:22828"/>
        <dbReference type="ChEBI" id="CHEBI:15377"/>
        <dbReference type="ChEBI" id="CHEBI:15378"/>
        <dbReference type="ChEBI" id="CHEBI:33019"/>
        <dbReference type="ChEBI" id="CHEBI:59457"/>
        <dbReference type="ChEBI" id="CHEBI:73183"/>
        <dbReference type="EC" id="3.6.1.31"/>
    </reaction>
</comment>
<comment type="pathway">
    <text>Amino-acid biosynthesis; L-histidine biosynthesis; L-histidine from 5-phospho-alpha-D-ribose 1-diphosphate: step 2/9.</text>
</comment>
<comment type="subcellular location">
    <subcellularLocation>
        <location evidence="1">Cytoplasm</location>
    </subcellularLocation>
</comment>
<comment type="similarity">
    <text evidence="2">Belongs to the PRA-PH family.</text>
</comment>
<name>HIS2_METAC</name>
<sequence>MPEADLSILNRVYDIILDRKENYDENSYVCKLLNHRKGMNKILEKVGEESIETILAVRNEDHKEIVSESSDLIFHLLVLLAANNVTLDEIAGELSARHEKMKRD</sequence>
<gene>
    <name type="primary">hisE</name>
    <name type="ordered locus">MA_1392</name>
</gene>